<dbReference type="EMBL" id="AF004911">
    <property type="protein sequence ID" value="AAB82415.1"/>
    <property type="molecule type" value="Genomic_DNA"/>
</dbReference>
<dbReference type="EMBL" id="Z48613">
    <property type="protein sequence ID" value="CAA88529.1"/>
    <property type="molecule type" value="Genomic_DNA"/>
</dbReference>
<dbReference type="EMBL" id="BK006946">
    <property type="protein sequence ID" value="DAA09910.1"/>
    <property type="molecule type" value="Genomic_DNA"/>
</dbReference>
<dbReference type="PIR" id="S53043">
    <property type="entry name" value="S53043"/>
</dbReference>
<dbReference type="RefSeq" id="NP_013725.1">
    <property type="nucleotide sequence ID" value="NM_001182508.1"/>
</dbReference>
<dbReference type="SMR" id="Q03690"/>
<dbReference type="BioGRID" id="35182">
    <property type="interactions" value="193"/>
</dbReference>
<dbReference type="DIP" id="DIP-5924N"/>
<dbReference type="FunCoup" id="Q03690">
    <property type="interactions" value="1287"/>
</dbReference>
<dbReference type="IntAct" id="Q03690">
    <property type="interactions" value="98"/>
</dbReference>
<dbReference type="MINT" id="Q03690"/>
<dbReference type="STRING" id="4932.YMR012W"/>
<dbReference type="iPTMnet" id="Q03690"/>
<dbReference type="PaxDb" id="4932-YMR012W"/>
<dbReference type="PeptideAtlas" id="Q03690"/>
<dbReference type="EnsemblFungi" id="YMR012W_mRNA">
    <property type="protein sequence ID" value="YMR012W"/>
    <property type="gene ID" value="YMR012W"/>
</dbReference>
<dbReference type="GeneID" id="855025"/>
<dbReference type="KEGG" id="sce:YMR012W"/>
<dbReference type="AGR" id="SGD:S000004614"/>
<dbReference type="SGD" id="S000004614">
    <property type="gene designation" value="CLU1"/>
</dbReference>
<dbReference type="VEuPathDB" id="FungiDB:YMR012W"/>
<dbReference type="eggNOG" id="KOG1839">
    <property type="taxonomic scope" value="Eukaryota"/>
</dbReference>
<dbReference type="GeneTree" id="ENSGT00390000012485"/>
<dbReference type="HOGENOM" id="CLU_003256_2_0_1"/>
<dbReference type="InParanoid" id="Q03690"/>
<dbReference type="OMA" id="HPVWDKD"/>
<dbReference type="OrthoDB" id="1414216at2759"/>
<dbReference type="BioCyc" id="YEAST:G3O-32720-MONOMER"/>
<dbReference type="BioGRID-ORCS" id="855025">
    <property type="hits" value="2 hits in 10 CRISPR screens"/>
</dbReference>
<dbReference type="CD-CODE" id="67785C55">
    <property type="entry name" value="Hypersomatic shock foci"/>
</dbReference>
<dbReference type="CD-CODE" id="E03F929F">
    <property type="entry name" value="Stress granule"/>
</dbReference>
<dbReference type="PRO" id="PR:Q03690"/>
<dbReference type="Proteomes" id="UP000002311">
    <property type="component" value="Chromosome XIII"/>
</dbReference>
<dbReference type="RNAct" id="Q03690">
    <property type="molecule type" value="protein"/>
</dbReference>
<dbReference type="GO" id="GO:0005737">
    <property type="term" value="C:cytoplasm"/>
    <property type="evidence" value="ECO:0007005"/>
    <property type="project" value="SGD"/>
</dbReference>
<dbReference type="GO" id="GO:0010494">
    <property type="term" value="C:cytoplasmic stress granule"/>
    <property type="evidence" value="ECO:0007005"/>
    <property type="project" value="SGD"/>
</dbReference>
<dbReference type="GO" id="GO:0003729">
    <property type="term" value="F:mRNA binding"/>
    <property type="evidence" value="ECO:0007005"/>
    <property type="project" value="SGD"/>
</dbReference>
<dbReference type="GO" id="GO:0003723">
    <property type="term" value="F:RNA binding"/>
    <property type="evidence" value="ECO:0000314"/>
    <property type="project" value="SGD"/>
</dbReference>
<dbReference type="GO" id="GO:0048312">
    <property type="term" value="P:intracellular distribution of mitochondria"/>
    <property type="evidence" value="ECO:0000318"/>
    <property type="project" value="GO_Central"/>
</dbReference>
<dbReference type="GO" id="GO:0007005">
    <property type="term" value="P:mitochondrion organization"/>
    <property type="evidence" value="ECO:0007669"/>
    <property type="project" value="UniProtKB-UniRule"/>
</dbReference>
<dbReference type="CDD" id="cd15466">
    <property type="entry name" value="CLU-central"/>
    <property type="match status" value="1"/>
</dbReference>
<dbReference type="CDD" id="cd22249">
    <property type="entry name" value="UDM1_RNF168_RNF169-like"/>
    <property type="match status" value="1"/>
</dbReference>
<dbReference type="FunFam" id="1.25.40.10:FF:001563">
    <property type="entry name" value="Clustered mitochondria protein homolog"/>
    <property type="match status" value="1"/>
</dbReference>
<dbReference type="Gene3D" id="1.25.40.10">
    <property type="entry name" value="Tetratricopeptide repeat domain"/>
    <property type="match status" value="1"/>
</dbReference>
<dbReference type="HAMAP" id="MF_03013">
    <property type="entry name" value="CLU"/>
    <property type="match status" value="1"/>
</dbReference>
<dbReference type="InterPro" id="IPR033646">
    <property type="entry name" value="CLU-central"/>
</dbReference>
<dbReference type="InterPro" id="IPR025697">
    <property type="entry name" value="CLU_dom"/>
</dbReference>
<dbReference type="InterPro" id="IPR028275">
    <property type="entry name" value="CLU_N"/>
</dbReference>
<dbReference type="InterPro" id="IPR027523">
    <property type="entry name" value="CLU_prot"/>
</dbReference>
<dbReference type="InterPro" id="IPR023231">
    <property type="entry name" value="GSKIP_dom_sf"/>
</dbReference>
<dbReference type="InterPro" id="IPR011990">
    <property type="entry name" value="TPR-like_helical_dom_sf"/>
</dbReference>
<dbReference type="PANTHER" id="PTHR12601:SF6">
    <property type="entry name" value="CLUSTERED MITOCHONDRIA PROTEIN HOMOLOG"/>
    <property type="match status" value="1"/>
</dbReference>
<dbReference type="PANTHER" id="PTHR12601">
    <property type="entry name" value="EUKARYOTIC TRANSLATION INITIATION FACTOR 3 SUBUNIT EIF-3"/>
    <property type="match status" value="1"/>
</dbReference>
<dbReference type="Pfam" id="PF13236">
    <property type="entry name" value="CLU"/>
    <property type="match status" value="1"/>
</dbReference>
<dbReference type="Pfam" id="PF15044">
    <property type="entry name" value="CLU_N"/>
    <property type="match status" value="1"/>
</dbReference>
<dbReference type="Pfam" id="PF12807">
    <property type="entry name" value="eIF3_p135"/>
    <property type="match status" value="1"/>
</dbReference>
<dbReference type="Pfam" id="PF13374">
    <property type="entry name" value="TPR_10"/>
    <property type="match status" value="1"/>
</dbReference>
<dbReference type="SUPFAM" id="SSF103107">
    <property type="entry name" value="Hypothetical protein c14orf129, hspc210"/>
    <property type="match status" value="1"/>
</dbReference>
<dbReference type="SUPFAM" id="SSF48452">
    <property type="entry name" value="TPR-like"/>
    <property type="match status" value="1"/>
</dbReference>
<dbReference type="PROSITE" id="PS51823">
    <property type="entry name" value="CLU"/>
    <property type="match status" value="1"/>
</dbReference>
<reference key="1">
    <citation type="journal article" date="1999" name="J. Biol. Chem.">
        <title>A 110-kilodalton subunit of translation initiation factor eIF3 and an associated 135-kilodalton protein are encoded by the Saccharomyces cerevisiae TIF32 and TIF31 genes.</title>
        <authorList>
            <person name="Vornlocher H.-P."/>
            <person name="Hanachi P."/>
            <person name="Ribeiro S."/>
            <person name="Hershey J.W.B."/>
        </authorList>
    </citation>
    <scope>NUCLEOTIDE SEQUENCE [GENOMIC DNA]</scope>
    <scope>PARTIAL PROTEIN SEQUENCE</scope>
    <scope>ASSOCIATION WITH THE EIF-3 COMPLEX</scope>
    <source>
        <strain>ATCC 204511 / S288c / AB972</strain>
    </source>
</reference>
<reference key="2">
    <citation type="journal article" date="1997" name="Nature">
        <title>The nucleotide sequence of Saccharomyces cerevisiae chromosome XIII.</title>
        <authorList>
            <person name="Bowman S."/>
            <person name="Churcher C.M."/>
            <person name="Badcock K."/>
            <person name="Brown D."/>
            <person name="Chillingworth T."/>
            <person name="Connor R."/>
            <person name="Dedman K."/>
            <person name="Devlin K."/>
            <person name="Gentles S."/>
            <person name="Hamlin N."/>
            <person name="Hunt S."/>
            <person name="Jagels K."/>
            <person name="Lye G."/>
            <person name="Moule S."/>
            <person name="Odell C."/>
            <person name="Pearson D."/>
            <person name="Rajandream M.A."/>
            <person name="Rice P."/>
            <person name="Skelton J."/>
            <person name="Walsh S.V."/>
            <person name="Whitehead S."/>
            <person name="Barrell B.G."/>
        </authorList>
    </citation>
    <scope>NUCLEOTIDE SEQUENCE [LARGE SCALE GENOMIC DNA]</scope>
    <source>
        <strain>ATCC 204508 / S288c</strain>
    </source>
</reference>
<reference key="3">
    <citation type="journal article" date="2014" name="G3 (Bethesda)">
        <title>The reference genome sequence of Saccharomyces cerevisiae: Then and now.</title>
        <authorList>
            <person name="Engel S.R."/>
            <person name="Dietrich F.S."/>
            <person name="Fisk D.G."/>
            <person name="Binkley G."/>
            <person name="Balakrishnan R."/>
            <person name="Costanzo M.C."/>
            <person name="Dwight S.S."/>
            <person name="Hitz B.C."/>
            <person name="Karra K."/>
            <person name="Nash R.S."/>
            <person name="Weng S."/>
            <person name="Wong E.D."/>
            <person name="Lloyd P."/>
            <person name="Skrzypek M.S."/>
            <person name="Miyasato S.R."/>
            <person name="Simison M."/>
            <person name="Cherry J.M."/>
        </authorList>
    </citation>
    <scope>GENOME REANNOTATION</scope>
    <source>
        <strain>ATCC 204508 / S288c</strain>
    </source>
</reference>
<reference key="4">
    <citation type="journal article" date="1998" name="J. Cell Sci.">
        <title>The S. cerevisiae CLU1 and D. discoideum cluA genes are functional homologues that influence mitochondrial morphology and distribution.</title>
        <authorList>
            <person name="Fields S.D."/>
            <person name="Conrad M.N."/>
            <person name="Clarke M."/>
        </authorList>
    </citation>
    <scope>FUNCTION</scope>
    <scope>DISRUPTION PHENOTYPE</scope>
</reference>
<reference key="5">
    <citation type="journal article" date="2003" name="Nature">
        <title>Global analysis of protein localization in budding yeast.</title>
        <authorList>
            <person name="Huh W.-K."/>
            <person name="Falvo J.V."/>
            <person name="Gerke L.C."/>
            <person name="Carroll A.S."/>
            <person name="Howson R.W."/>
            <person name="Weissman J.S."/>
            <person name="O'Shea E.K."/>
        </authorList>
    </citation>
    <scope>SUBCELLULAR LOCATION [LARGE SCALE ANALYSIS]</scope>
</reference>
<reference key="6">
    <citation type="journal article" date="2003" name="Nature">
        <title>Global analysis of protein expression in yeast.</title>
        <authorList>
            <person name="Ghaemmaghami S."/>
            <person name="Huh W.-K."/>
            <person name="Bower K."/>
            <person name="Howson R.W."/>
            <person name="Belle A."/>
            <person name="Dephoure N."/>
            <person name="O'Shea E.K."/>
            <person name="Weissman J.S."/>
        </authorList>
    </citation>
    <scope>LEVEL OF PROTEIN EXPRESSION [LARGE SCALE ANALYSIS]</scope>
</reference>
<reference key="7">
    <citation type="journal article" date="2006" name="J. Cell. Biochem.">
        <title>Tandem affinity purification revealed the hypusine-dependent binding of eukaryotic initiation factor 5A to the translating 80S ribosomal complex.</title>
        <authorList>
            <person name="Jao D.L."/>
            <person name="Chen K.Y."/>
        </authorList>
    </citation>
    <scope>IDENTIFICATION BY MASS SPECTROMETRY</scope>
    <scope>ASSOCIATION WITH THE 80S RIBOSOME</scope>
</reference>
<reference key="8">
    <citation type="journal article" date="2008" name="Mol. Cell. Proteomics">
        <title>A multidimensional chromatography technology for in-depth phosphoproteome analysis.</title>
        <authorList>
            <person name="Albuquerque C.P."/>
            <person name="Smolka M.B."/>
            <person name="Payne S.H."/>
            <person name="Bafna V."/>
            <person name="Eng J."/>
            <person name="Zhou H."/>
        </authorList>
    </citation>
    <scope>PHOSPHORYLATION [LARGE SCALE ANALYSIS] AT SER-1247</scope>
    <scope>IDENTIFICATION BY MASS SPECTROMETRY [LARGE SCALE ANALYSIS]</scope>
</reference>
<reference key="9">
    <citation type="journal article" date="2009" name="BMC Genomics">
        <title>Low oxygen levels as a trigger for enhancement of respiratory metabolism in Saccharomyces cerevisiae.</title>
        <authorList>
            <person name="Rintala E."/>
            <person name="Toivari M."/>
            <person name="Pitkanen J.P."/>
            <person name="Wiebe M.G."/>
            <person name="Ruohonen L."/>
            <person name="Penttila M."/>
        </authorList>
    </citation>
    <scope>INDUCTION</scope>
</reference>
<reference key="10">
    <citation type="journal article" date="2009" name="Science">
        <title>Global analysis of Cdk1 substrate phosphorylation sites provides insights into evolution.</title>
        <authorList>
            <person name="Holt L.J."/>
            <person name="Tuch B.B."/>
            <person name="Villen J."/>
            <person name="Johnson A.D."/>
            <person name="Gygi S.P."/>
            <person name="Morgan D.O."/>
        </authorList>
    </citation>
    <scope>PHOSPHORYLATION [LARGE SCALE ANALYSIS] AT SER-1247</scope>
    <scope>IDENTIFICATION BY MASS SPECTROMETRY [LARGE SCALE ANALYSIS]</scope>
</reference>
<evidence type="ECO:0000255" key="1">
    <source>
        <dbReference type="HAMAP-Rule" id="MF_03013"/>
    </source>
</evidence>
<evidence type="ECO:0000255" key="2">
    <source>
        <dbReference type="PROSITE-ProRule" id="PRU01167"/>
    </source>
</evidence>
<evidence type="ECO:0000256" key="3">
    <source>
        <dbReference type="SAM" id="MobiDB-lite"/>
    </source>
</evidence>
<evidence type="ECO:0000269" key="4">
    <source>
    </source>
</evidence>
<evidence type="ECO:0000269" key="5">
    <source>
    </source>
</evidence>
<evidence type="ECO:0000269" key="6">
    <source>
    </source>
</evidence>
<evidence type="ECO:0000269" key="7">
    <source>
    </source>
</evidence>
<evidence type="ECO:0007744" key="8">
    <source>
    </source>
</evidence>
<evidence type="ECO:0007744" key="9">
    <source>
    </source>
</evidence>
<proteinExistence type="evidence at protein level"/>
<organism>
    <name type="scientific">Saccharomyces cerevisiae (strain ATCC 204508 / S288c)</name>
    <name type="common">Baker's yeast</name>
    <dbReference type="NCBI Taxonomy" id="559292"/>
    <lineage>
        <taxon>Eukaryota</taxon>
        <taxon>Fungi</taxon>
        <taxon>Dikarya</taxon>
        <taxon>Ascomycota</taxon>
        <taxon>Saccharomycotina</taxon>
        <taxon>Saccharomycetes</taxon>
        <taxon>Saccharomycetales</taxon>
        <taxon>Saccharomycetaceae</taxon>
        <taxon>Saccharomyces</taxon>
    </lineage>
</organism>
<comment type="function">
    <text evidence="1 7">mRNA-binding protein involved in proper cytoplasmic distribution of mitochondria.</text>
</comment>
<comment type="subunit">
    <text>May associate with the eukaryotic translation initiation factor 3 (eIF-3) complex. Associates with the 80S ribosome.</text>
</comment>
<comment type="subcellular location">
    <subcellularLocation>
        <location evidence="1 4">Cytoplasm</location>
    </subcellularLocation>
</comment>
<comment type="induction">
    <text evidence="6">Expression is increased in intermediate compared to fully aerobic conditions.</text>
</comment>
<comment type="disruption phenotype">
    <text evidence="7">Causes mitochondria to cluster within cells.</text>
</comment>
<comment type="miscellaneous">
    <text evidence="5">Present with 17000 molecules/cell in log phase SD medium.</text>
</comment>
<comment type="similarity">
    <text evidence="1">Belongs to the CLU family.</text>
</comment>
<feature type="chain" id="PRO_0000123557" description="Clustered mitochondria protein 1">
    <location>
        <begin position="1"/>
        <end position="1277"/>
    </location>
</feature>
<feature type="domain" description="Clu" evidence="2">
    <location>
        <begin position="339"/>
        <end position="596"/>
    </location>
</feature>
<feature type="repeat" description="TPR 1">
    <location>
        <begin position="704"/>
        <end position="738"/>
    </location>
</feature>
<feature type="repeat" description="TPR 2">
    <location>
        <begin position="1020"/>
        <end position="1053"/>
    </location>
</feature>
<feature type="repeat" description="TPR 3">
    <location>
        <begin position="1148"/>
        <end position="1181"/>
    </location>
</feature>
<feature type="region of interest" description="Disordered" evidence="3">
    <location>
        <begin position="19"/>
        <end position="39"/>
    </location>
</feature>
<feature type="region of interest" description="Disordered" evidence="3">
    <location>
        <begin position="148"/>
        <end position="176"/>
    </location>
</feature>
<feature type="region of interest" description="Disordered" evidence="3">
    <location>
        <begin position="1212"/>
        <end position="1277"/>
    </location>
</feature>
<feature type="compositionally biased region" description="Basic residues" evidence="3">
    <location>
        <begin position="27"/>
        <end position="36"/>
    </location>
</feature>
<feature type="compositionally biased region" description="Basic and acidic residues" evidence="3">
    <location>
        <begin position="153"/>
        <end position="176"/>
    </location>
</feature>
<feature type="compositionally biased region" description="Basic and acidic residues" evidence="3">
    <location>
        <begin position="1235"/>
        <end position="1249"/>
    </location>
</feature>
<feature type="compositionally biased region" description="Basic residues" evidence="3">
    <location>
        <begin position="1264"/>
        <end position="1277"/>
    </location>
</feature>
<feature type="modified residue" description="Phosphoserine" evidence="8 9">
    <location>
        <position position="1247"/>
    </location>
</feature>
<name>CLU_YEAST</name>
<accession>Q03690</accession>
<accession>D6VZI6</accession>
<sequence>MSEKKEEVKNATVKVTVKLPKEDNHSHNTKHLKKTQSSKNNDISFEIGKESKIQTVLDVLAMIPSSKYLTNVGLKTIEGDSQLSDEMSIKEIVGEKSELKLQLILKPYSAREALKHVITVRDFIGFAQETSDGLSEFAISTGSSFSSLPLGPIKERSKQEEKDEKSDPEEKKNTFKDVTDEEKLKFNEMVHEVFSSFKNSSINKLLTSESNIITPCVRSLSFAPYNPVPPFYRSKGHLFYLQIVTLEGESFYITAIPSGFYVNKSNSTKFDPSPKENTDENAHSSLIYYSLFDLIASRSKKFISHVQAFEKKLSALDSTSYVRPSNTFLHKPWFVSSLPPNNPDYLRLQTAALDTTPERNFNDEFQAIKDLTTSTLQDRIEMERLFSKVVHEFSVTAASGAMSIFYSDFVAMNPESPTRDQIFLKDNIFYSYVSDVSGNYEGKGGDEAAIAASNQDLKTINILNRLHMHEVRYLLTTVVEFAGRRILAQTPVPGLLATMGNKIVKDANTGEEVTEDFVNDINVKYGLDEGLGKIVYDADFDSVLEKKFVKAFHLKKHKVNGTELAFSSQSKGIVGFDKRRYILDLANTYPLDINFARQNFDNIEETGNRYPHRQTLLRPELVEKWWNNKVEKEGVEFEKAYEENLFSYNPDAYQVEGIEDANVDEMSNYLQKEVIPSVIQDYLSGNLSTPYNGEHLADTLHKNGINMRYLGKIIELSQKELDSQIVHYEQNLKAVEQDNKEYEDWEKSYLQKIENMIKERQAKINKLVQEGKEVPKELTEDLKLNDEEIKKPTDGKPVVVAYDELVPLIKISELEIVSRSLKHVLKDLSKDVPVFLVPSLVAYVFNMLVGINYNADPKPEPVDEFYPVNKCSFAKLTRSELLEAVSKQAFLRFRHQLPSNWIEAYMENPFTLIRSVSYKFGIQLLNKEYFFTREQLESYKQSLDKKIRNKFVEPPTTFSLSDLTIIPRVKFSEYTSSVSEEFWAQGASMINEDKQSALTLLAQSITVLEDVNNILHPAVAEKYLSLSAIYNKLALYPEAIAFCRKACTIYERVSGIDSFEMMRALTNLAILEFSNESPYNATVVYNRLAEILKVYELPKIHHPAPTSIFNHLEQLALGVQDTKLAIEVLGQLSSYVVELEGKDSLAYGYTESRLGNLFAALKDFHRALEHITVTQGIFTKQLGMNHTHSAQSRQWVNGLSSLIMDLKQKKQLAQDQMSTTGSNSAGHKKTNHRQKKDDVKPELANKSVDELLTFIEGDSSNSKSKNKTNNKKKHGKK</sequence>
<keyword id="KW-0963">Cytoplasm</keyword>
<keyword id="KW-0903">Direct protein sequencing</keyword>
<keyword id="KW-0597">Phosphoprotein</keyword>
<keyword id="KW-1185">Reference proteome</keyword>
<keyword id="KW-0677">Repeat</keyword>
<keyword id="KW-0802">TPR repeat</keyword>
<protein>
    <recommendedName>
        <fullName>Clustered mitochondria protein 1</fullName>
    </recommendedName>
    <alternativeName>
        <fullName>Translation initiation factor 31</fullName>
    </alternativeName>
    <alternativeName>
        <fullName>eIF3-associated protein p135</fullName>
    </alternativeName>
</protein>
<gene>
    <name evidence="1" type="primary">CLU1</name>
    <name evidence="1" type="synonym">TIF31</name>
    <name type="ordered locus">YMR012W</name>
    <name type="ORF">YM8270.16</name>
</gene>